<feature type="chain" id="PRO_1000198278" description="UPF0301 protein KPK_0728">
    <location>
        <begin position="1"/>
        <end position="187"/>
    </location>
</feature>
<accession>B5XUA2</accession>
<proteinExistence type="inferred from homology"/>
<sequence>MNLQHHFLIAMPALQDPIFRRSVVYICEYNDEGAMGIIINKPLENLQVEGILEKLKIVPEPRNPEIRLDKPVMLGGPLAEDRGFILHTPPSDFSSSIRISDNTVVTTSRDVLETLGTDRQPGNVLVALGYSSWEKGQLEQEILDNAWLTAPADQNILFRTPIADRWREAAKLIGIDIVTMPGVAGHA</sequence>
<name>Y728_KLEP3</name>
<dbReference type="EMBL" id="CP000964">
    <property type="protein sequence ID" value="ACI09168.1"/>
    <property type="molecule type" value="Genomic_DNA"/>
</dbReference>
<dbReference type="SMR" id="B5XUA2"/>
<dbReference type="KEGG" id="kpe:KPK_0728"/>
<dbReference type="HOGENOM" id="CLU_057596_1_0_6"/>
<dbReference type="BioCyc" id="KPNE507522:GI0B-728-MONOMER"/>
<dbReference type="Proteomes" id="UP000001734">
    <property type="component" value="Chromosome"/>
</dbReference>
<dbReference type="GO" id="GO:0005829">
    <property type="term" value="C:cytosol"/>
    <property type="evidence" value="ECO:0007669"/>
    <property type="project" value="TreeGrafter"/>
</dbReference>
<dbReference type="Gene3D" id="3.40.1740.10">
    <property type="entry name" value="VC0467-like"/>
    <property type="match status" value="1"/>
</dbReference>
<dbReference type="Gene3D" id="3.30.70.1300">
    <property type="entry name" value="VC0467-like domains"/>
    <property type="match status" value="1"/>
</dbReference>
<dbReference type="HAMAP" id="MF_00758">
    <property type="entry name" value="UPF0301"/>
    <property type="match status" value="1"/>
</dbReference>
<dbReference type="InterPro" id="IPR003774">
    <property type="entry name" value="AlgH-like"/>
</dbReference>
<dbReference type="NCBIfam" id="NF001266">
    <property type="entry name" value="PRK00228.1-1"/>
    <property type="match status" value="1"/>
</dbReference>
<dbReference type="PANTHER" id="PTHR30327">
    <property type="entry name" value="UNCHARACTERIZED PROTEIN YQGE"/>
    <property type="match status" value="1"/>
</dbReference>
<dbReference type="PANTHER" id="PTHR30327:SF1">
    <property type="entry name" value="UPF0301 PROTEIN YQGE"/>
    <property type="match status" value="1"/>
</dbReference>
<dbReference type="Pfam" id="PF02622">
    <property type="entry name" value="DUF179"/>
    <property type="match status" value="1"/>
</dbReference>
<dbReference type="SUPFAM" id="SSF143456">
    <property type="entry name" value="VC0467-like"/>
    <property type="match status" value="1"/>
</dbReference>
<reference key="1">
    <citation type="journal article" date="2008" name="PLoS Genet.">
        <title>Complete genome sequence of the N2-fixing broad host range endophyte Klebsiella pneumoniae 342 and virulence predictions verified in mice.</title>
        <authorList>
            <person name="Fouts D.E."/>
            <person name="Tyler H.L."/>
            <person name="DeBoy R.T."/>
            <person name="Daugherty S."/>
            <person name="Ren Q."/>
            <person name="Badger J.H."/>
            <person name="Durkin A.S."/>
            <person name="Huot H."/>
            <person name="Shrivastava S."/>
            <person name="Kothari S."/>
            <person name="Dodson R.J."/>
            <person name="Mohamoud Y."/>
            <person name="Khouri H."/>
            <person name="Roesch L.F.W."/>
            <person name="Krogfelt K.A."/>
            <person name="Struve C."/>
            <person name="Triplett E.W."/>
            <person name="Methe B.A."/>
        </authorList>
    </citation>
    <scope>NUCLEOTIDE SEQUENCE [LARGE SCALE GENOMIC DNA]</scope>
    <source>
        <strain>342</strain>
    </source>
</reference>
<gene>
    <name type="ordered locus">KPK_0728</name>
</gene>
<organism>
    <name type="scientific">Klebsiella pneumoniae (strain 342)</name>
    <dbReference type="NCBI Taxonomy" id="507522"/>
    <lineage>
        <taxon>Bacteria</taxon>
        <taxon>Pseudomonadati</taxon>
        <taxon>Pseudomonadota</taxon>
        <taxon>Gammaproteobacteria</taxon>
        <taxon>Enterobacterales</taxon>
        <taxon>Enterobacteriaceae</taxon>
        <taxon>Klebsiella/Raoultella group</taxon>
        <taxon>Klebsiella</taxon>
        <taxon>Klebsiella pneumoniae complex</taxon>
    </lineage>
</organism>
<comment type="similarity">
    <text evidence="1">Belongs to the UPF0301 (AlgH) family.</text>
</comment>
<evidence type="ECO:0000255" key="1">
    <source>
        <dbReference type="HAMAP-Rule" id="MF_00758"/>
    </source>
</evidence>
<protein>
    <recommendedName>
        <fullName evidence="1">UPF0301 protein KPK_0728</fullName>
    </recommendedName>
</protein>